<dbReference type="EMBL" id="M86335">
    <property type="protein sequence ID" value="AAA92978.1"/>
    <property type="molecule type" value="Genomic_DNA"/>
</dbReference>
<dbReference type="PIR" id="I50541">
    <property type="entry name" value="I50541"/>
</dbReference>
<dbReference type="SMR" id="P40654"/>
<dbReference type="Proteomes" id="UP001190640">
    <property type="component" value="Unplaced"/>
</dbReference>
<dbReference type="GO" id="GO:0005634">
    <property type="term" value="C:nucleus"/>
    <property type="evidence" value="ECO:0007669"/>
    <property type="project" value="UniProtKB-SubCell"/>
</dbReference>
<dbReference type="GO" id="GO:0001228">
    <property type="term" value="F:DNA-binding transcription activator activity, RNA polymerase II-specific"/>
    <property type="evidence" value="ECO:0007669"/>
    <property type="project" value="TreeGrafter"/>
</dbReference>
<dbReference type="GO" id="GO:0000978">
    <property type="term" value="F:RNA polymerase II cis-regulatory region sequence-specific DNA binding"/>
    <property type="evidence" value="ECO:0007669"/>
    <property type="project" value="TreeGrafter"/>
</dbReference>
<dbReference type="GO" id="GO:0007420">
    <property type="term" value="P:brain development"/>
    <property type="evidence" value="ECO:0007669"/>
    <property type="project" value="TreeGrafter"/>
</dbReference>
<dbReference type="GO" id="GO:0048593">
    <property type="term" value="P:camera-type eye morphogenesis"/>
    <property type="evidence" value="ECO:0007669"/>
    <property type="project" value="TreeGrafter"/>
</dbReference>
<dbReference type="GO" id="GO:0000122">
    <property type="term" value="P:negative regulation of transcription by RNA polymerase II"/>
    <property type="evidence" value="ECO:0007669"/>
    <property type="project" value="TreeGrafter"/>
</dbReference>
<dbReference type="GO" id="GO:0030182">
    <property type="term" value="P:neuron differentiation"/>
    <property type="evidence" value="ECO:0007669"/>
    <property type="project" value="TreeGrafter"/>
</dbReference>
<dbReference type="Gene3D" id="1.10.30.10">
    <property type="entry name" value="High mobility group box domain"/>
    <property type="match status" value="1"/>
</dbReference>
<dbReference type="InterPro" id="IPR009071">
    <property type="entry name" value="HMG_box_dom"/>
</dbReference>
<dbReference type="InterPro" id="IPR036910">
    <property type="entry name" value="HMG_box_dom_sf"/>
</dbReference>
<dbReference type="InterPro" id="IPR050140">
    <property type="entry name" value="SRY-related_HMG-box_TF-like"/>
</dbReference>
<dbReference type="PANTHER" id="PTHR10270">
    <property type="entry name" value="SOX TRANSCRIPTION FACTOR"/>
    <property type="match status" value="1"/>
</dbReference>
<dbReference type="PANTHER" id="PTHR10270:SF221">
    <property type="entry name" value="TRANSCRIPTION FACTOR SOX-12"/>
    <property type="match status" value="1"/>
</dbReference>
<dbReference type="Pfam" id="PF00505">
    <property type="entry name" value="HMG_box"/>
    <property type="match status" value="1"/>
</dbReference>
<dbReference type="SMART" id="SM00398">
    <property type="entry name" value="HMG"/>
    <property type="match status" value="1"/>
</dbReference>
<dbReference type="SUPFAM" id="SSF47095">
    <property type="entry name" value="HMG-box"/>
    <property type="match status" value="1"/>
</dbReference>
<dbReference type="PROSITE" id="PS50118">
    <property type="entry name" value="HMG_BOX_2"/>
    <property type="match status" value="1"/>
</dbReference>
<organism>
    <name type="scientific">Eublepharis macularius</name>
    <name type="common">Leopard gecko</name>
    <name type="synonym">Cyrtodactylus macularius</name>
    <dbReference type="NCBI Taxonomy" id="481883"/>
    <lineage>
        <taxon>Eukaryota</taxon>
        <taxon>Metazoa</taxon>
        <taxon>Chordata</taxon>
        <taxon>Craniata</taxon>
        <taxon>Vertebrata</taxon>
        <taxon>Euteleostomi</taxon>
        <taxon>Lepidosauria</taxon>
        <taxon>Squamata</taxon>
        <taxon>Bifurcata</taxon>
        <taxon>Gekkota</taxon>
        <taxon>Eublepharidae</taxon>
        <taxon>Eublepharinae</taxon>
        <taxon>Eublepharis</taxon>
    </lineage>
</organism>
<name>LG27_EUBMA</name>
<evidence type="ECO:0000255" key="1">
    <source>
        <dbReference type="PROSITE-ProRule" id="PRU00267"/>
    </source>
</evidence>
<protein>
    <recommendedName>
        <fullName>SRY-related protein LG27</fullName>
    </recommendedName>
</protein>
<accession>P40654</accession>
<keyword id="KW-0238">DNA-binding</keyword>
<keyword id="KW-0539">Nucleus</keyword>
<keyword id="KW-1185">Reference proteome</keyword>
<reference key="1">
    <citation type="journal article" date="1993" name="PCR Methods Appl.">
        <title>PCR amplification of SRY-related gene sequences reveals evolutionary conservation of the SRY-box motif.</title>
        <authorList>
            <person name="Coriat A.M."/>
            <person name="Mueller U."/>
            <person name="Harry J.L."/>
            <person name="Uwanogho D."/>
            <person name="Sharpe P.T."/>
        </authorList>
    </citation>
    <scope>NUCLEOTIDE SEQUENCE [GENOMIC DNA]</scope>
</reference>
<proteinExistence type="inferred from homology"/>
<feature type="chain" id="PRO_0000048797" description="SRY-related protein LG27">
    <location>
        <begin position="1" status="less than"/>
        <end position="71" status="greater than"/>
    </location>
</feature>
<feature type="DNA-binding region" description="HMG box" evidence="1">
    <location>
        <begin position="1"/>
        <end position="68"/>
    </location>
</feature>
<feature type="non-terminal residue">
    <location>
        <position position="1"/>
    </location>
</feature>
<feature type="non-terminal residue">
    <location>
        <position position="71"/>
    </location>
</feature>
<sequence length="71" mass="8919">VKRPMNAFMVWSQNERRKIMDQWPDMHNAEISKRLGRRWQLLQDSERYPLSRRRSVRLKHMADYPNYKYRP</sequence>
<comment type="subcellular location">
    <subcellularLocation>
        <location evidence="1">Nucleus</location>
    </subcellularLocation>
</comment>